<protein>
    <recommendedName>
        <fullName>Sperm protamine P1</fullName>
    </recommendedName>
</protein>
<evidence type="ECO:0000256" key="1">
    <source>
        <dbReference type="SAM" id="MobiDB-lite"/>
    </source>
</evidence>
<evidence type="ECO:0000305" key="2"/>
<dbReference type="EMBL" id="L35333">
    <property type="protein sequence ID" value="AAA74604.1"/>
    <property type="molecule type" value="Genomic_DNA"/>
</dbReference>
<dbReference type="GO" id="GO:0000786">
    <property type="term" value="C:nucleosome"/>
    <property type="evidence" value="ECO:0007669"/>
    <property type="project" value="UniProtKB-KW"/>
</dbReference>
<dbReference type="GO" id="GO:0005634">
    <property type="term" value="C:nucleus"/>
    <property type="evidence" value="ECO:0007669"/>
    <property type="project" value="UniProtKB-SubCell"/>
</dbReference>
<dbReference type="GO" id="GO:0003677">
    <property type="term" value="F:DNA binding"/>
    <property type="evidence" value="ECO:0007669"/>
    <property type="project" value="UniProtKB-KW"/>
</dbReference>
<dbReference type="GO" id="GO:0030261">
    <property type="term" value="P:chromosome condensation"/>
    <property type="evidence" value="ECO:0007669"/>
    <property type="project" value="UniProtKB-KW"/>
</dbReference>
<dbReference type="GO" id="GO:0035092">
    <property type="term" value="P:sperm DNA condensation"/>
    <property type="evidence" value="ECO:0007669"/>
    <property type="project" value="InterPro"/>
</dbReference>
<dbReference type="InterPro" id="IPR000221">
    <property type="entry name" value="Protamine_P1"/>
</dbReference>
<dbReference type="PROSITE" id="PS00048">
    <property type="entry name" value="PROTAMINE_P1"/>
    <property type="match status" value="1"/>
</dbReference>
<sequence>MARYRHSRSRSRSRYRRRRRRRSRYRSRRRRYRGRRRRRSRRGRRRRGYSRRRYSRRRRRY</sequence>
<proteinExistence type="evidence at transcript level"/>
<name>HSP1_MACGI</name>
<organism>
    <name type="scientific">Macropus giganteus</name>
    <name type="common">Eastern gray kangaroo</name>
    <dbReference type="NCBI Taxonomy" id="9317"/>
    <lineage>
        <taxon>Eukaryota</taxon>
        <taxon>Metazoa</taxon>
        <taxon>Chordata</taxon>
        <taxon>Craniata</taxon>
        <taxon>Vertebrata</taxon>
        <taxon>Euteleostomi</taxon>
        <taxon>Mammalia</taxon>
        <taxon>Metatheria</taxon>
        <taxon>Diprotodontia</taxon>
        <taxon>Macropodidae</taxon>
        <taxon>Macropus</taxon>
    </lineage>
</organism>
<accession>P42139</accession>
<gene>
    <name type="primary">PRM1</name>
</gene>
<feature type="chain" id="PRO_0000191490" description="Sperm protamine P1">
    <location>
        <begin position="1"/>
        <end position="61"/>
    </location>
</feature>
<feature type="region of interest" description="Disordered" evidence="1">
    <location>
        <begin position="1"/>
        <end position="61"/>
    </location>
</feature>
<reference key="1">
    <citation type="journal article" date="1995" name="Proc. R. Soc. B">
        <title>Molecular phylogeny and evolution of marsupial protamine P1 genes.</title>
        <authorList>
            <person name="Retief J.D."/>
            <person name="Krajewski C."/>
            <person name="Westerman M."/>
            <person name="Winkfein R.J."/>
            <person name="Dixon G.H."/>
        </authorList>
    </citation>
    <scope>NUCLEOTIDE SEQUENCE [GENOMIC DNA]</scope>
    <source>
        <tissue>Sperm</tissue>
    </source>
</reference>
<comment type="function">
    <text>Protamines substitute for histones in the chromatin of sperm during the haploid phase of spermatogenesis. They compact sperm DNA into a highly condensed, stable and inactive complex.</text>
</comment>
<comment type="subcellular location">
    <subcellularLocation>
        <location>Nucleus</location>
    </subcellularLocation>
    <subcellularLocation>
        <location>Chromosome</location>
    </subcellularLocation>
</comment>
<comment type="tissue specificity">
    <text>Testis.</text>
</comment>
<comment type="similarity">
    <text evidence="2">Belongs to the protamine P1 family.</text>
</comment>
<keyword id="KW-0158">Chromosome</keyword>
<keyword id="KW-0217">Developmental protein</keyword>
<keyword id="KW-0221">Differentiation</keyword>
<keyword id="KW-0226">DNA condensation</keyword>
<keyword id="KW-0238">DNA-binding</keyword>
<keyword id="KW-0544">Nucleosome core</keyword>
<keyword id="KW-0539">Nucleus</keyword>
<keyword id="KW-0744">Spermatogenesis</keyword>